<accession>B2HN61</accession>
<comment type="function">
    <text evidence="1">The RuvA-RuvB-RuvC complex processes Holliday junction (HJ) DNA during genetic recombination and DNA repair. Endonuclease that resolves HJ intermediates. Cleaves cruciform DNA by making single-stranded nicks across the HJ at symmetrical positions within the homologous arms, yielding a 5'-phosphate and a 3'-hydroxyl group; requires a central core of homology in the junction. The consensus cleavage sequence is 5'-(A/T)TT(C/G)-3'. Cleavage occurs on the 3'-side of the TT dinucleotide at the point of strand exchange. HJ branch migration catalyzed by RuvA-RuvB allows RuvC to scan DNA until it finds its consensus sequence, where it cleaves and resolves the cruciform DNA.</text>
</comment>
<comment type="catalytic activity">
    <reaction evidence="1">
        <text>Endonucleolytic cleavage at a junction such as a reciprocal single-stranded crossover between two homologous DNA duplexes (Holliday junction).</text>
        <dbReference type="EC" id="3.1.21.10"/>
    </reaction>
</comment>
<comment type="cofactor">
    <cofactor evidence="1">
        <name>Mg(2+)</name>
        <dbReference type="ChEBI" id="CHEBI:18420"/>
    </cofactor>
    <text evidence="1">Binds 2 Mg(2+) ion per subunit.</text>
</comment>
<comment type="subunit">
    <text evidence="1">Homodimer which binds Holliday junction (HJ) DNA. The HJ becomes 2-fold symmetrical on binding to RuvC with unstacked arms; it has a different conformation from HJ DNA in complex with RuvA. In the full resolvosome a probable DNA-RuvA(4)-RuvB(12)-RuvC(2) complex forms which resolves the HJ.</text>
</comment>
<comment type="subcellular location">
    <subcellularLocation>
        <location evidence="1">Cytoplasm</location>
    </subcellularLocation>
</comment>
<comment type="similarity">
    <text evidence="1">Belongs to the RuvC family.</text>
</comment>
<organism>
    <name type="scientific">Mycobacterium marinum (strain ATCC BAA-535 / M)</name>
    <dbReference type="NCBI Taxonomy" id="216594"/>
    <lineage>
        <taxon>Bacteria</taxon>
        <taxon>Bacillati</taxon>
        <taxon>Actinomycetota</taxon>
        <taxon>Actinomycetes</taxon>
        <taxon>Mycobacteriales</taxon>
        <taxon>Mycobacteriaceae</taxon>
        <taxon>Mycobacterium</taxon>
        <taxon>Mycobacterium ulcerans group</taxon>
    </lineage>
</organism>
<protein>
    <recommendedName>
        <fullName evidence="1">Crossover junction endodeoxyribonuclease RuvC</fullName>
        <ecNumber evidence="1">3.1.21.10</ecNumber>
    </recommendedName>
    <alternativeName>
        <fullName evidence="1">Holliday junction nuclease RuvC</fullName>
    </alternativeName>
    <alternativeName>
        <fullName evidence="1">Holliday junction resolvase RuvC</fullName>
    </alternativeName>
</protein>
<evidence type="ECO:0000255" key="1">
    <source>
        <dbReference type="HAMAP-Rule" id="MF_00034"/>
    </source>
</evidence>
<sequence length="184" mass="19565">MRVMGVDPGLTRCGLSLIESGQGRQLTALDVDVVRTPSDAPLSSRLLAINEAVEHWLETHRPDVVAIERVFSQQNVKTVMGTAQAGGVVALAAAKRGVEVHFHTPSEVKAAVTGNGTADKAQVTAMVTRILALQTKPTPADAADALALAICHCWRAPMIAQMAKAHALAEQQRRSYTAKLKAAR</sequence>
<dbReference type="EC" id="3.1.21.10" evidence="1"/>
<dbReference type="EMBL" id="CP000854">
    <property type="protein sequence ID" value="ACC40559.1"/>
    <property type="molecule type" value="Genomic_DNA"/>
</dbReference>
<dbReference type="RefSeq" id="WP_011739820.1">
    <property type="nucleotide sequence ID" value="NC_010612.1"/>
</dbReference>
<dbReference type="SMR" id="B2HN61"/>
<dbReference type="STRING" id="216594.MMAR_2109"/>
<dbReference type="GeneID" id="34342233"/>
<dbReference type="GeneID" id="93437647"/>
<dbReference type="KEGG" id="mmi:MMAR_2109"/>
<dbReference type="eggNOG" id="COG0817">
    <property type="taxonomic scope" value="Bacteria"/>
</dbReference>
<dbReference type="HOGENOM" id="CLU_091257_0_2_11"/>
<dbReference type="OrthoDB" id="9805499at2"/>
<dbReference type="Proteomes" id="UP000001190">
    <property type="component" value="Chromosome"/>
</dbReference>
<dbReference type="GO" id="GO:0005737">
    <property type="term" value="C:cytoplasm"/>
    <property type="evidence" value="ECO:0007669"/>
    <property type="project" value="UniProtKB-SubCell"/>
</dbReference>
<dbReference type="GO" id="GO:0048476">
    <property type="term" value="C:Holliday junction resolvase complex"/>
    <property type="evidence" value="ECO:0007669"/>
    <property type="project" value="UniProtKB-UniRule"/>
</dbReference>
<dbReference type="GO" id="GO:0008821">
    <property type="term" value="F:crossover junction DNA endonuclease activity"/>
    <property type="evidence" value="ECO:0007669"/>
    <property type="project" value="UniProtKB-UniRule"/>
</dbReference>
<dbReference type="GO" id="GO:0003677">
    <property type="term" value="F:DNA binding"/>
    <property type="evidence" value="ECO:0007669"/>
    <property type="project" value="UniProtKB-KW"/>
</dbReference>
<dbReference type="GO" id="GO:0000287">
    <property type="term" value="F:magnesium ion binding"/>
    <property type="evidence" value="ECO:0007669"/>
    <property type="project" value="UniProtKB-UniRule"/>
</dbReference>
<dbReference type="GO" id="GO:0006310">
    <property type="term" value="P:DNA recombination"/>
    <property type="evidence" value="ECO:0007669"/>
    <property type="project" value="UniProtKB-UniRule"/>
</dbReference>
<dbReference type="GO" id="GO:0006281">
    <property type="term" value="P:DNA repair"/>
    <property type="evidence" value="ECO:0007669"/>
    <property type="project" value="UniProtKB-UniRule"/>
</dbReference>
<dbReference type="CDD" id="cd16962">
    <property type="entry name" value="RuvC"/>
    <property type="match status" value="1"/>
</dbReference>
<dbReference type="FunFam" id="3.30.420.10:FF:000002">
    <property type="entry name" value="Crossover junction endodeoxyribonuclease RuvC"/>
    <property type="match status" value="1"/>
</dbReference>
<dbReference type="Gene3D" id="3.30.420.10">
    <property type="entry name" value="Ribonuclease H-like superfamily/Ribonuclease H"/>
    <property type="match status" value="1"/>
</dbReference>
<dbReference type="HAMAP" id="MF_00034">
    <property type="entry name" value="RuvC"/>
    <property type="match status" value="1"/>
</dbReference>
<dbReference type="InterPro" id="IPR012337">
    <property type="entry name" value="RNaseH-like_sf"/>
</dbReference>
<dbReference type="InterPro" id="IPR036397">
    <property type="entry name" value="RNaseH_sf"/>
</dbReference>
<dbReference type="InterPro" id="IPR020563">
    <property type="entry name" value="X-over_junc_endoDNase_Mg_BS"/>
</dbReference>
<dbReference type="InterPro" id="IPR002176">
    <property type="entry name" value="X-over_junc_endoDNase_RuvC"/>
</dbReference>
<dbReference type="NCBIfam" id="TIGR00228">
    <property type="entry name" value="ruvC"/>
    <property type="match status" value="1"/>
</dbReference>
<dbReference type="PANTHER" id="PTHR30194">
    <property type="entry name" value="CROSSOVER JUNCTION ENDODEOXYRIBONUCLEASE RUVC"/>
    <property type="match status" value="1"/>
</dbReference>
<dbReference type="PANTHER" id="PTHR30194:SF3">
    <property type="entry name" value="CROSSOVER JUNCTION ENDODEOXYRIBONUCLEASE RUVC"/>
    <property type="match status" value="1"/>
</dbReference>
<dbReference type="Pfam" id="PF02075">
    <property type="entry name" value="RuvC"/>
    <property type="match status" value="1"/>
</dbReference>
<dbReference type="PRINTS" id="PR00696">
    <property type="entry name" value="RSOLVASERUVC"/>
</dbReference>
<dbReference type="SUPFAM" id="SSF53098">
    <property type="entry name" value="Ribonuclease H-like"/>
    <property type="match status" value="1"/>
</dbReference>
<dbReference type="PROSITE" id="PS01321">
    <property type="entry name" value="RUVC"/>
    <property type="match status" value="1"/>
</dbReference>
<gene>
    <name evidence="1" type="primary">ruvC</name>
    <name type="ordered locus">MMAR_2109</name>
</gene>
<feature type="chain" id="PRO_1000090539" description="Crossover junction endodeoxyribonuclease RuvC">
    <location>
        <begin position="1"/>
        <end position="184"/>
    </location>
</feature>
<feature type="active site" evidence="1">
    <location>
        <position position="7"/>
    </location>
</feature>
<feature type="active site" evidence="1">
    <location>
        <position position="68"/>
    </location>
</feature>
<feature type="active site" evidence="1">
    <location>
        <position position="141"/>
    </location>
</feature>
<feature type="binding site" evidence="1">
    <location>
        <position position="7"/>
    </location>
    <ligand>
        <name>Mg(2+)</name>
        <dbReference type="ChEBI" id="CHEBI:18420"/>
        <label>1</label>
    </ligand>
</feature>
<feature type="binding site" evidence="1">
    <location>
        <position position="68"/>
    </location>
    <ligand>
        <name>Mg(2+)</name>
        <dbReference type="ChEBI" id="CHEBI:18420"/>
        <label>2</label>
    </ligand>
</feature>
<feature type="binding site" evidence="1">
    <location>
        <position position="141"/>
    </location>
    <ligand>
        <name>Mg(2+)</name>
        <dbReference type="ChEBI" id="CHEBI:18420"/>
        <label>1</label>
    </ligand>
</feature>
<proteinExistence type="inferred from homology"/>
<keyword id="KW-0963">Cytoplasm</keyword>
<keyword id="KW-0227">DNA damage</keyword>
<keyword id="KW-0233">DNA recombination</keyword>
<keyword id="KW-0234">DNA repair</keyword>
<keyword id="KW-0238">DNA-binding</keyword>
<keyword id="KW-0255">Endonuclease</keyword>
<keyword id="KW-0378">Hydrolase</keyword>
<keyword id="KW-0460">Magnesium</keyword>
<keyword id="KW-0479">Metal-binding</keyword>
<keyword id="KW-0540">Nuclease</keyword>
<keyword id="KW-1185">Reference proteome</keyword>
<reference key="1">
    <citation type="journal article" date="2008" name="Genome Res.">
        <title>Insights from the complete genome sequence of Mycobacterium marinum on the evolution of Mycobacterium tuberculosis.</title>
        <authorList>
            <person name="Stinear T.P."/>
            <person name="Seemann T."/>
            <person name="Harrison P.F."/>
            <person name="Jenkin G.A."/>
            <person name="Davies J.K."/>
            <person name="Johnson P.D."/>
            <person name="Abdellah Z."/>
            <person name="Arrowsmith C."/>
            <person name="Chillingworth T."/>
            <person name="Churcher C."/>
            <person name="Clarke K."/>
            <person name="Cronin A."/>
            <person name="Davis P."/>
            <person name="Goodhead I."/>
            <person name="Holroyd N."/>
            <person name="Jagels K."/>
            <person name="Lord A."/>
            <person name="Moule S."/>
            <person name="Mungall K."/>
            <person name="Norbertczak H."/>
            <person name="Quail M.A."/>
            <person name="Rabbinowitsch E."/>
            <person name="Walker D."/>
            <person name="White B."/>
            <person name="Whitehead S."/>
            <person name="Small P.L."/>
            <person name="Brosch R."/>
            <person name="Ramakrishnan L."/>
            <person name="Fischbach M.A."/>
            <person name="Parkhill J."/>
            <person name="Cole S.T."/>
        </authorList>
    </citation>
    <scope>NUCLEOTIDE SEQUENCE [LARGE SCALE GENOMIC DNA]</scope>
    <source>
        <strain>ATCC BAA-535 / M</strain>
    </source>
</reference>
<name>RUVC_MYCMM</name>